<gene>
    <name evidence="1" type="primary">fabA</name>
    <name type="ordered locus">NGR_c35770</name>
</gene>
<keyword id="KW-0963">Cytoplasm</keyword>
<keyword id="KW-0275">Fatty acid biosynthesis</keyword>
<keyword id="KW-0276">Fatty acid metabolism</keyword>
<keyword id="KW-0413">Isomerase</keyword>
<keyword id="KW-0444">Lipid biosynthesis</keyword>
<keyword id="KW-0443">Lipid metabolism</keyword>
<keyword id="KW-0456">Lyase</keyword>
<keyword id="KW-1185">Reference proteome</keyword>
<feature type="chain" id="PRO_1000201196" description="3-hydroxydecanoyl-[acyl-carrier-protein] dehydratase">
    <location>
        <begin position="1"/>
        <end position="171"/>
    </location>
</feature>
<feature type="active site" evidence="1">
    <location>
        <position position="71"/>
    </location>
</feature>
<reference key="1">
    <citation type="journal article" date="2009" name="Appl. Environ. Microbiol.">
        <title>Rhizobium sp. strain NGR234 possesses a remarkable number of secretion systems.</title>
        <authorList>
            <person name="Schmeisser C."/>
            <person name="Liesegang H."/>
            <person name="Krysciak D."/>
            <person name="Bakkou N."/>
            <person name="Le Quere A."/>
            <person name="Wollherr A."/>
            <person name="Heinemeyer I."/>
            <person name="Morgenstern B."/>
            <person name="Pommerening-Roeser A."/>
            <person name="Flores M."/>
            <person name="Palacios R."/>
            <person name="Brenner S."/>
            <person name="Gottschalk G."/>
            <person name="Schmitz R.A."/>
            <person name="Broughton W.J."/>
            <person name="Perret X."/>
            <person name="Strittmatter A.W."/>
            <person name="Streit W.R."/>
        </authorList>
    </citation>
    <scope>NUCLEOTIDE SEQUENCE [LARGE SCALE GENOMIC DNA]</scope>
    <source>
        <strain>NBRC 101917 / NGR234</strain>
    </source>
</reference>
<organism>
    <name type="scientific">Sinorhizobium fredii (strain NBRC 101917 / NGR234)</name>
    <dbReference type="NCBI Taxonomy" id="394"/>
    <lineage>
        <taxon>Bacteria</taxon>
        <taxon>Pseudomonadati</taxon>
        <taxon>Pseudomonadota</taxon>
        <taxon>Alphaproteobacteria</taxon>
        <taxon>Hyphomicrobiales</taxon>
        <taxon>Rhizobiaceae</taxon>
        <taxon>Sinorhizobium/Ensifer group</taxon>
        <taxon>Sinorhizobium</taxon>
    </lineage>
</organism>
<protein>
    <recommendedName>
        <fullName evidence="1">3-hydroxydecanoyl-[acyl-carrier-protein] dehydratase</fullName>
        <ecNumber evidence="1">4.2.1.59</ecNumber>
    </recommendedName>
    <alternativeName>
        <fullName evidence="1">3-hydroxyacyl-[acyl-carrier-protein] dehydratase FabA</fullName>
    </alternativeName>
    <alternativeName>
        <fullName evidence="1">Beta-hydroxydecanoyl thioester dehydrase</fullName>
    </alternativeName>
    <alternativeName>
        <fullName evidence="1">Trans-2-decenoyl-[acyl-carrier-protein] isomerase</fullName>
        <ecNumber evidence="1">5.3.3.14</ecNumber>
    </alternativeName>
</protein>
<comment type="function">
    <text evidence="1">Necessary for the introduction of cis unsaturation into fatty acids. Catalyzes the dehydration of (3R)-3-hydroxydecanoyl-ACP to E-(2)-decenoyl-ACP and then its isomerization to Z-(3)-decenoyl-ACP. Can catalyze the dehydratase reaction for beta-hydroxyacyl-ACPs with saturated chain lengths up to 16:0, being most active on intermediate chain length.</text>
</comment>
<comment type="catalytic activity">
    <reaction evidence="1">
        <text>a (3R)-hydroxyacyl-[ACP] = a (2E)-enoyl-[ACP] + H2O</text>
        <dbReference type="Rhea" id="RHEA:13097"/>
        <dbReference type="Rhea" id="RHEA-COMP:9925"/>
        <dbReference type="Rhea" id="RHEA-COMP:9945"/>
        <dbReference type="ChEBI" id="CHEBI:15377"/>
        <dbReference type="ChEBI" id="CHEBI:78784"/>
        <dbReference type="ChEBI" id="CHEBI:78827"/>
        <dbReference type="EC" id="4.2.1.59"/>
    </reaction>
</comment>
<comment type="catalytic activity">
    <reaction evidence="1">
        <text>(3R)-hydroxydecanoyl-[ACP] = (2E)-decenoyl-[ACP] + H2O</text>
        <dbReference type="Rhea" id="RHEA:41860"/>
        <dbReference type="Rhea" id="RHEA-COMP:9638"/>
        <dbReference type="Rhea" id="RHEA-COMP:9639"/>
        <dbReference type="ChEBI" id="CHEBI:15377"/>
        <dbReference type="ChEBI" id="CHEBI:78466"/>
        <dbReference type="ChEBI" id="CHEBI:78467"/>
    </reaction>
</comment>
<comment type="catalytic activity">
    <reaction evidence="1">
        <text>(2E)-decenoyl-[ACP] = (3Z)-decenoyl-[ACP]</text>
        <dbReference type="Rhea" id="RHEA:23568"/>
        <dbReference type="Rhea" id="RHEA-COMP:9639"/>
        <dbReference type="Rhea" id="RHEA-COMP:9927"/>
        <dbReference type="ChEBI" id="CHEBI:78467"/>
        <dbReference type="ChEBI" id="CHEBI:78798"/>
        <dbReference type="EC" id="5.3.3.14"/>
    </reaction>
</comment>
<comment type="pathway">
    <text evidence="1">Lipid metabolism; fatty acid biosynthesis.</text>
</comment>
<comment type="subunit">
    <text evidence="1">Homodimer.</text>
</comment>
<comment type="subcellular location">
    <subcellularLocation>
        <location evidence="1">Cytoplasm</location>
    </subcellularLocation>
</comment>
<comment type="similarity">
    <text evidence="1">Belongs to the thioester dehydratase family. FabA subfamily.</text>
</comment>
<sequence length="171" mass="19015">MTTRQSSFSYEEILTCGRGEMFGSGNAQLPLPPMLMFNRITEISETGGPHDKGFVRAEFDITPDLWFFPCHFMGDPVMPGCLGLDAMWQLTGFFLGWLGEPGKGRALSTGEVKFTGMVTPKTKLVEYGIDFKRVMRGRLVLGIADGWMKADGEVIYKATDLRVGLFQEKAD</sequence>
<proteinExistence type="inferred from homology"/>
<dbReference type="EC" id="4.2.1.59" evidence="1"/>
<dbReference type="EC" id="5.3.3.14" evidence="1"/>
<dbReference type="EMBL" id="CP001389">
    <property type="protein sequence ID" value="ACP27300.1"/>
    <property type="molecule type" value="Genomic_DNA"/>
</dbReference>
<dbReference type="RefSeq" id="WP_012710045.1">
    <property type="nucleotide sequence ID" value="NC_012587.1"/>
</dbReference>
<dbReference type="RefSeq" id="YP_002828053.1">
    <property type="nucleotide sequence ID" value="NC_012587.1"/>
</dbReference>
<dbReference type="SMR" id="C3MC75"/>
<dbReference type="STRING" id="394.NGR_c35770"/>
<dbReference type="KEGG" id="rhi:NGR_c35770"/>
<dbReference type="PATRIC" id="fig|394.7.peg.6430"/>
<dbReference type="eggNOG" id="COG0764">
    <property type="taxonomic scope" value="Bacteria"/>
</dbReference>
<dbReference type="HOGENOM" id="CLU_097925_0_0_5"/>
<dbReference type="OrthoDB" id="9786735at2"/>
<dbReference type="UniPathway" id="UPA00094"/>
<dbReference type="Proteomes" id="UP000001054">
    <property type="component" value="Chromosome"/>
</dbReference>
<dbReference type="GO" id="GO:0005737">
    <property type="term" value="C:cytoplasm"/>
    <property type="evidence" value="ECO:0007669"/>
    <property type="project" value="UniProtKB-SubCell"/>
</dbReference>
<dbReference type="GO" id="GO:0019171">
    <property type="term" value="F:(3R)-hydroxyacyl-[acyl-carrier-protein] dehydratase activity"/>
    <property type="evidence" value="ECO:0007669"/>
    <property type="project" value="UniProtKB-UniRule"/>
</dbReference>
<dbReference type="GO" id="GO:0034017">
    <property type="term" value="F:trans-2-decenoyl-acyl-carrier-protein isomerase activity"/>
    <property type="evidence" value="ECO:0007669"/>
    <property type="project" value="UniProtKB-UniRule"/>
</dbReference>
<dbReference type="GO" id="GO:0006636">
    <property type="term" value="P:unsaturated fatty acid biosynthetic process"/>
    <property type="evidence" value="ECO:0007669"/>
    <property type="project" value="UniProtKB-UniRule"/>
</dbReference>
<dbReference type="CDD" id="cd01287">
    <property type="entry name" value="FabA"/>
    <property type="match status" value="1"/>
</dbReference>
<dbReference type="Gene3D" id="3.10.129.10">
    <property type="entry name" value="Hotdog Thioesterase"/>
    <property type="match status" value="1"/>
</dbReference>
<dbReference type="HAMAP" id="MF_00405">
    <property type="entry name" value="FabA"/>
    <property type="match status" value="1"/>
</dbReference>
<dbReference type="InterPro" id="IPR010083">
    <property type="entry name" value="FabA"/>
</dbReference>
<dbReference type="InterPro" id="IPR013114">
    <property type="entry name" value="FabA_FabZ"/>
</dbReference>
<dbReference type="InterPro" id="IPR029069">
    <property type="entry name" value="HotDog_dom_sf"/>
</dbReference>
<dbReference type="NCBIfam" id="TIGR01749">
    <property type="entry name" value="fabA"/>
    <property type="match status" value="1"/>
</dbReference>
<dbReference type="NCBIfam" id="NF003509">
    <property type="entry name" value="PRK05174.1"/>
    <property type="match status" value="1"/>
</dbReference>
<dbReference type="PANTHER" id="PTHR30272">
    <property type="entry name" value="3-HYDROXYACYL-[ACYL-CARRIER-PROTEIN] DEHYDRATASE"/>
    <property type="match status" value="1"/>
</dbReference>
<dbReference type="PANTHER" id="PTHR30272:SF8">
    <property type="entry name" value="3-HYDROXYDECANOYL-[ACYL-CARRIER-PROTEIN] DEHYDRATASE"/>
    <property type="match status" value="1"/>
</dbReference>
<dbReference type="Pfam" id="PF07977">
    <property type="entry name" value="FabA"/>
    <property type="match status" value="1"/>
</dbReference>
<dbReference type="SUPFAM" id="SSF54637">
    <property type="entry name" value="Thioesterase/thiol ester dehydrase-isomerase"/>
    <property type="match status" value="1"/>
</dbReference>
<accession>C3MC75</accession>
<name>FABA_SINFN</name>
<evidence type="ECO:0000255" key="1">
    <source>
        <dbReference type="HAMAP-Rule" id="MF_00405"/>
    </source>
</evidence>